<keyword id="KW-0963">Cytoplasm</keyword>
<keyword id="KW-0269">Exonuclease</keyword>
<keyword id="KW-0378">Hydrolase</keyword>
<keyword id="KW-0540">Nuclease</keyword>
<keyword id="KW-1185">Reference proteome</keyword>
<reference key="1">
    <citation type="journal article" date="2005" name="Science">
        <title>Life at depth: Photobacterium profundum genome sequence and expression analysis.</title>
        <authorList>
            <person name="Vezzi A."/>
            <person name="Campanaro S."/>
            <person name="D'Angelo M."/>
            <person name="Simonato F."/>
            <person name="Vitulo N."/>
            <person name="Lauro F.M."/>
            <person name="Cestaro A."/>
            <person name="Malacrida G."/>
            <person name="Simionati B."/>
            <person name="Cannata N."/>
            <person name="Romualdi C."/>
            <person name="Bartlett D.H."/>
            <person name="Valle G."/>
        </authorList>
    </citation>
    <scope>NUCLEOTIDE SEQUENCE [LARGE SCALE GENOMIC DNA]</scope>
    <source>
        <strain>ATCC BAA-1253 / SS9</strain>
    </source>
</reference>
<comment type="function">
    <text evidence="1">3'-to-5' exoribonuclease specific for small oligoribonucleotides.</text>
</comment>
<comment type="subcellular location">
    <subcellularLocation>
        <location evidence="1">Cytoplasm</location>
    </subcellularLocation>
</comment>
<comment type="similarity">
    <text evidence="1">Belongs to the oligoribonuclease family.</text>
</comment>
<sequence length="181" mass="21027">MTISDQNLIWVDLEMTGLDPEIHQIIEIATIVTDAQLNILAEGPVLAIHQSEAELAKMDDWCTNTHTNSGLVERIRQSKFTEEDAIRQTIAFLEQWVPKGASPICGNSIGQDRRFLYKHMPELEQYFHYRYLDVSTIKELTRRWQPELLEGFSKKGSHLALDDIHDSIAELRYYREHIFTI</sequence>
<feature type="chain" id="PRO_0000111059" description="Oligoribonuclease">
    <location>
        <begin position="1"/>
        <end position="181"/>
    </location>
</feature>
<feature type="domain" description="Exonuclease" evidence="1">
    <location>
        <begin position="8"/>
        <end position="171"/>
    </location>
</feature>
<feature type="active site" evidence="1">
    <location>
        <position position="129"/>
    </location>
</feature>
<name>ORN_PHOPR</name>
<proteinExistence type="inferred from homology"/>
<organism>
    <name type="scientific">Photobacterium profundum (strain SS9)</name>
    <dbReference type="NCBI Taxonomy" id="298386"/>
    <lineage>
        <taxon>Bacteria</taxon>
        <taxon>Pseudomonadati</taxon>
        <taxon>Pseudomonadota</taxon>
        <taxon>Gammaproteobacteria</taxon>
        <taxon>Vibrionales</taxon>
        <taxon>Vibrionaceae</taxon>
        <taxon>Photobacterium</taxon>
    </lineage>
</organism>
<evidence type="ECO:0000255" key="1">
    <source>
        <dbReference type="HAMAP-Rule" id="MF_00045"/>
    </source>
</evidence>
<gene>
    <name evidence="1" type="primary">orn</name>
    <name type="ordered locus">PBPRA3370</name>
</gene>
<protein>
    <recommendedName>
        <fullName evidence="1">Oligoribonuclease</fullName>
        <ecNumber evidence="1">3.1.15.-</ecNumber>
    </recommendedName>
</protein>
<accession>Q6LM23</accession>
<dbReference type="EC" id="3.1.15.-" evidence="1"/>
<dbReference type="EMBL" id="CR378673">
    <property type="protein sequence ID" value="CAG21655.1"/>
    <property type="molecule type" value="Genomic_DNA"/>
</dbReference>
<dbReference type="RefSeq" id="WP_011219901.1">
    <property type="nucleotide sequence ID" value="NC_006370.1"/>
</dbReference>
<dbReference type="SMR" id="Q6LM23"/>
<dbReference type="STRING" id="298386.PBPRA3370"/>
<dbReference type="KEGG" id="ppr:PBPRA3370"/>
<dbReference type="eggNOG" id="COG1949">
    <property type="taxonomic scope" value="Bacteria"/>
</dbReference>
<dbReference type="HOGENOM" id="CLU_064761_2_0_6"/>
<dbReference type="Proteomes" id="UP000000593">
    <property type="component" value="Chromosome 1"/>
</dbReference>
<dbReference type="GO" id="GO:0005737">
    <property type="term" value="C:cytoplasm"/>
    <property type="evidence" value="ECO:0007669"/>
    <property type="project" value="UniProtKB-SubCell"/>
</dbReference>
<dbReference type="GO" id="GO:0000175">
    <property type="term" value="F:3'-5'-RNA exonuclease activity"/>
    <property type="evidence" value="ECO:0007669"/>
    <property type="project" value="InterPro"/>
</dbReference>
<dbReference type="GO" id="GO:0003676">
    <property type="term" value="F:nucleic acid binding"/>
    <property type="evidence" value="ECO:0007669"/>
    <property type="project" value="InterPro"/>
</dbReference>
<dbReference type="GO" id="GO:0006259">
    <property type="term" value="P:DNA metabolic process"/>
    <property type="evidence" value="ECO:0007669"/>
    <property type="project" value="UniProtKB-ARBA"/>
</dbReference>
<dbReference type="CDD" id="cd06135">
    <property type="entry name" value="Orn"/>
    <property type="match status" value="1"/>
</dbReference>
<dbReference type="FunFam" id="3.30.420.10:FF:000003">
    <property type="entry name" value="Oligoribonuclease"/>
    <property type="match status" value="1"/>
</dbReference>
<dbReference type="Gene3D" id="3.30.420.10">
    <property type="entry name" value="Ribonuclease H-like superfamily/Ribonuclease H"/>
    <property type="match status" value="1"/>
</dbReference>
<dbReference type="HAMAP" id="MF_00045">
    <property type="entry name" value="Oligoribonuclease"/>
    <property type="match status" value="1"/>
</dbReference>
<dbReference type="InterPro" id="IPR013520">
    <property type="entry name" value="Exonuclease_RNaseT/DNA_pol3"/>
</dbReference>
<dbReference type="InterPro" id="IPR022894">
    <property type="entry name" value="Oligoribonuclease"/>
</dbReference>
<dbReference type="InterPro" id="IPR012337">
    <property type="entry name" value="RNaseH-like_sf"/>
</dbReference>
<dbReference type="InterPro" id="IPR036397">
    <property type="entry name" value="RNaseH_sf"/>
</dbReference>
<dbReference type="NCBIfam" id="NF003765">
    <property type="entry name" value="PRK05359.1"/>
    <property type="match status" value="1"/>
</dbReference>
<dbReference type="PANTHER" id="PTHR11046">
    <property type="entry name" value="OLIGORIBONUCLEASE, MITOCHONDRIAL"/>
    <property type="match status" value="1"/>
</dbReference>
<dbReference type="PANTHER" id="PTHR11046:SF0">
    <property type="entry name" value="OLIGORIBONUCLEASE, MITOCHONDRIAL"/>
    <property type="match status" value="1"/>
</dbReference>
<dbReference type="Pfam" id="PF00929">
    <property type="entry name" value="RNase_T"/>
    <property type="match status" value="1"/>
</dbReference>
<dbReference type="SMART" id="SM00479">
    <property type="entry name" value="EXOIII"/>
    <property type="match status" value="1"/>
</dbReference>
<dbReference type="SUPFAM" id="SSF53098">
    <property type="entry name" value="Ribonuclease H-like"/>
    <property type="match status" value="1"/>
</dbReference>